<name>KDPA_MYCA9</name>
<dbReference type="EMBL" id="CU458896">
    <property type="protein sequence ID" value="CAM63330.1"/>
    <property type="molecule type" value="Genomic_DNA"/>
</dbReference>
<dbReference type="RefSeq" id="WP_005111699.1">
    <property type="nucleotide sequence ID" value="NZ_MLCG01000001.1"/>
</dbReference>
<dbReference type="SMR" id="B1MDL1"/>
<dbReference type="GeneID" id="93380185"/>
<dbReference type="KEGG" id="mab:MAB_3254c"/>
<dbReference type="Proteomes" id="UP000007137">
    <property type="component" value="Chromosome"/>
</dbReference>
<dbReference type="GO" id="GO:0005886">
    <property type="term" value="C:plasma membrane"/>
    <property type="evidence" value="ECO:0007669"/>
    <property type="project" value="UniProtKB-SubCell"/>
</dbReference>
<dbReference type="GO" id="GO:0008556">
    <property type="term" value="F:P-type potassium transmembrane transporter activity"/>
    <property type="evidence" value="ECO:0007669"/>
    <property type="project" value="InterPro"/>
</dbReference>
<dbReference type="GO" id="GO:0030955">
    <property type="term" value="F:potassium ion binding"/>
    <property type="evidence" value="ECO:0007669"/>
    <property type="project" value="UniProtKB-UniRule"/>
</dbReference>
<dbReference type="HAMAP" id="MF_00275">
    <property type="entry name" value="KdpA"/>
    <property type="match status" value="1"/>
</dbReference>
<dbReference type="InterPro" id="IPR004623">
    <property type="entry name" value="KdpA"/>
</dbReference>
<dbReference type="NCBIfam" id="TIGR00680">
    <property type="entry name" value="kdpA"/>
    <property type="match status" value="1"/>
</dbReference>
<dbReference type="PANTHER" id="PTHR30607">
    <property type="entry name" value="POTASSIUM-TRANSPORTING ATPASE A CHAIN"/>
    <property type="match status" value="1"/>
</dbReference>
<dbReference type="PANTHER" id="PTHR30607:SF2">
    <property type="entry name" value="POTASSIUM-TRANSPORTING ATPASE POTASSIUM-BINDING SUBUNIT"/>
    <property type="match status" value="1"/>
</dbReference>
<dbReference type="Pfam" id="PF03814">
    <property type="entry name" value="KdpA"/>
    <property type="match status" value="1"/>
</dbReference>
<dbReference type="PIRSF" id="PIRSF001294">
    <property type="entry name" value="K_ATPaseA"/>
    <property type="match status" value="1"/>
</dbReference>
<proteinExistence type="inferred from homology"/>
<organism>
    <name type="scientific">Mycobacteroides abscessus (strain ATCC 19977 / DSM 44196 / CCUG 20993 / CIP 104536 / JCM 13569 / NCTC 13031 / TMC 1543 / L948)</name>
    <name type="common">Mycobacterium abscessus</name>
    <dbReference type="NCBI Taxonomy" id="561007"/>
    <lineage>
        <taxon>Bacteria</taxon>
        <taxon>Bacillati</taxon>
        <taxon>Actinomycetota</taxon>
        <taxon>Actinomycetes</taxon>
        <taxon>Mycobacteriales</taxon>
        <taxon>Mycobacteriaceae</taxon>
        <taxon>Mycobacteroides</taxon>
        <taxon>Mycobacteroides abscessus</taxon>
    </lineage>
</organism>
<accession>B1MDL1</accession>
<sequence>MNSALAAGLQIGFVILALAIAYVPLGDYMARVFTGPHSLRASGLSTIKHSRVERLIYRVGRVDPETEQTWVGYTLSLLGFSFASVIFLYVLQRIQGVLPLSGGLGAVSPAVAFNTAVSFVTNTNWQSYTPETTMSNLTQMVGLAVQNFVSAAVGLTVAVALIRGVVRTTSGGELGNFWVDLVRGSLRILLPLSFAVALILLSQGTIQSVYTHFEATALDGTAQHIALAPVASQEAIKEIGTNGGGILGANSAHPFENPTPLSNVIEILAILIIPVCLTRTYSTMVGDKRQGLTVLSVMGTLFGGMLALVTWAESSPRGIAAQAAGAMMEGKEVRFGIPGSALFAVSTTGTSTGAVDAAHDSFTAAGGGALILNMLLGEIAPGGVGTGLYGILVLAIIAVFVGGLLVGRTPEFLGKKIGRRQITMAALSVLVMPALVLVGTGISVALSTTTGYQGNSGDPGTPSSIHGFSEVLYAYASAANNNGSAFGGLTVTSHWFQASLGMAMLLGRFLPIIFTLALAGSLATQRKTPASAGTLHTHGPMFAGLHTGTVLLVAALTFFPALALGPIAEAVL</sequence>
<evidence type="ECO:0000255" key="1">
    <source>
        <dbReference type="HAMAP-Rule" id="MF_00275"/>
    </source>
</evidence>
<comment type="function">
    <text evidence="1">Part of the high-affinity ATP-driven potassium transport (or Kdp) system, which catalyzes the hydrolysis of ATP coupled with the electrogenic transport of potassium into the cytoplasm. This subunit binds the extracellular potassium ions and delivers the ions to the membrane domain of KdpB through an intramembrane tunnel.</text>
</comment>
<comment type="subunit">
    <text evidence="1">The system is composed of three essential subunits: KdpA, KdpB and KdpC.</text>
</comment>
<comment type="subcellular location">
    <subcellularLocation>
        <location evidence="1">Cell membrane</location>
        <topology evidence="1">Multi-pass membrane protein</topology>
    </subcellularLocation>
</comment>
<comment type="similarity">
    <text evidence="1">Belongs to the KdpA family.</text>
</comment>
<protein>
    <recommendedName>
        <fullName evidence="1">Potassium-transporting ATPase potassium-binding subunit</fullName>
    </recommendedName>
    <alternativeName>
        <fullName evidence="1">ATP phosphohydrolase [potassium-transporting] A chain</fullName>
    </alternativeName>
    <alternativeName>
        <fullName evidence="1">Potassium-binding and translocating subunit A</fullName>
    </alternativeName>
    <alternativeName>
        <fullName evidence="1">Potassium-translocating ATPase A chain</fullName>
    </alternativeName>
</protein>
<gene>
    <name evidence="1" type="primary">kdpA</name>
    <name type="ordered locus">MAB_3254c</name>
</gene>
<reference key="1">
    <citation type="journal article" date="2009" name="PLoS ONE">
        <title>Non mycobacterial virulence genes in the genome of the emerging pathogen Mycobacterium abscessus.</title>
        <authorList>
            <person name="Ripoll F."/>
            <person name="Pasek S."/>
            <person name="Schenowitz C."/>
            <person name="Dossat C."/>
            <person name="Barbe V."/>
            <person name="Rottman M."/>
            <person name="Macheras E."/>
            <person name="Heym B."/>
            <person name="Herrmann J.L."/>
            <person name="Daffe M."/>
            <person name="Brosch R."/>
            <person name="Risler J.L."/>
            <person name="Gaillard J.L."/>
        </authorList>
    </citation>
    <scope>NUCLEOTIDE SEQUENCE [LARGE SCALE GENOMIC DNA]</scope>
    <source>
        <strain>ATCC 19977 / DSM 44196 / CCUG 20993 / CIP 104536 / JCM 13569 / NCTC 13031 / TMC 1543 / L948</strain>
    </source>
</reference>
<feature type="chain" id="PRO_1000114694" description="Potassium-transporting ATPase potassium-binding subunit">
    <location>
        <begin position="1"/>
        <end position="572"/>
    </location>
</feature>
<feature type="transmembrane region" description="Helical" evidence="1">
    <location>
        <begin position="5"/>
        <end position="25"/>
    </location>
</feature>
<feature type="transmembrane region" description="Helical" evidence="1">
    <location>
        <begin position="71"/>
        <end position="91"/>
    </location>
</feature>
<feature type="transmembrane region" description="Helical" evidence="1">
    <location>
        <begin position="97"/>
        <end position="117"/>
    </location>
</feature>
<feature type="transmembrane region" description="Helical" evidence="1">
    <location>
        <begin position="142"/>
        <end position="162"/>
    </location>
</feature>
<feature type="transmembrane region" description="Helical" evidence="1">
    <location>
        <begin position="188"/>
        <end position="208"/>
    </location>
</feature>
<feature type="transmembrane region" description="Helical" evidence="1">
    <location>
        <begin position="258"/>
        <end position="278"/>
    </location>
</feature>
<feature type="transmembrane region" description="Helical" evidence="1">
    <location>
        <begin position="292"/>
        <end position="312"/>
    </location>
</feature>
<feature type="transmembrane region" description="Helical" evidence="1">
    <location>
        <begin position="387"/>
        <end position="407"/>
    </location>
</feature>
<feature type="transmembrane region" description="Helical" evidence="1">
    <location>
        <begin position="422"/>
        <end position="442"/>
    </location>
</feature>
<feature type="transmembrane region" description="Helical" evidence="1">
    <location>
        <begin position="500"/>
        <end position="520"/>
    </location>
</feature>
<feature type="transmembrane region" description="Helical" evidence="1">
    <location>
        <begin position="548"/>
        <end position="568"/>
    </location>
</feature>
<keyword id="KW-1003">Cell membrane</keyword>
<keyword id="KW-0406">Ion transport</keyword>
<keyword id="KW-0472">Membrane</keyword>
<keyword id="KW-0630">Potassium</keyword>
<keyword id="KW-0633">Potassium transport</keyword>
<keyword id="KW-1185">Reference proteome</keyword>
<keyword id="KW-0812">Transmembrane</keyword>
<keyword id="KW-1133">Transmembrane helix</keyword>
<keyword id="KW-0813">Transport</keyword>